<gene>
    <name type="primary">sir2D</name>
    <name type="ORF">DDB_G0289967</name>
</gene>
<keyword id="KW-0175">Coiled coil</keyword>
<keyword id="KW-0479">Metal-binding</keyword>
<keyword id="KW-0520">NAD</keyword>
<keyword id="KW-1185">Reference proteome</keyword>
<keyword id="KW-0808">Transferase</keyword>
<keyword id="KW-0862">Zinc</keyword>
<accession>Q54GV7</accession>
<feature type="chain" id="PRO_0000393128" description="NAD-dependent deacetylase sir2D">
    <location>
        <begin position="1"/>
        <end position="542"/>
    </location>
</feature>
<feature type="domain" description="Deacetylase sirtuin-type" evidence="3">
    <location>
        <begin position="283"/>
        <end position="542"/>
    </location>
</feature>
<feature type="region of interest" description="Disordered" evidence="4">
    <location>
        <begin position="1"/>
        <end position="37"/>
    </location>
</feature>
<feature type="region of interest" description="Disordered" evidence="4">
    <location>
        <begin position="136"/>
        <end position="160"/>
    </location>
</feature>
<feature type="coiled-coil region" evidence="2">
    <location>
        <begin position="165"/>
        <end position="193"/>
    </location>
</feature>
<feature type="compositionally biased region" description="Low complexity" evidence="4">
    <location>
        <begin position="8"/>
        <end position="25"/>
    </location>
</feature>
<feature type="active site" description="Proton acceptor" evidence="3">
    <location>
        <position position="411"/>
    </location>
</feature>
<feature type="binding site" evidence="3">
    <location>
        <position position="419"/>
    </location>
    <ligand>
        <name>Zn(2+)</name>
        <dbReference type="ChEBI" id="CHEBI:29105"/>
    </ligand>
</feature>
<feature type="binding site" evidence="3">
    <location>
        <position position="422"/>
    </location>
    <ligand>
        <name>Zn(2+)</name>
        <dbReference type="ChEBI" id="CHEBI:29105"/>
    </ligand>
</feature>
<feature type="binding site" evidence="3">
    <location>
        <position position="443"/>
    </location>
    <ligand>
        <name>Zn(2+)</name>
        <dbReference type="ChEBI" id="CHEBI:29105"/>
    </ligand>
</feature>
<feature type="binding site" evidence="3">
    <location>
        <position position="446"/>
    </location>
    <ligand>
        <name>Zn(2+)</name>
        <dbReference type="ChEBI" id="CHEBI:29105"/>
    </ligand>
</feature>
<comment type="function">
    <text evidence="1">NAD-dependent deacetylase, which plays an important role in the regulation of transcriptional repression.</text>
</comment>
<comment type="catalytic activity">
    <reaction evidence="3">
        <text>N(6)-acetyl-L-lysyl-[protein] + NAD(+) + H2O = 2''-O-acetyl-ADP-D-ribose + nicotinamide + L-lysyl-[protein]</text>
        <dbReference type="Rhea" id="RHEA:43636"/>
        <dbReference type="Rhea" id="RHEA-COMP:9752"/>
        <dbReference type="Rhea" id="RHEA-COMP:10731"/>
        <dbReference type="ChEBI" id="CHEBI:15377"/>
        <dbReference type="ChEBI" id="CHEBI:17154"/>
        <dbReference type="ChEBI" id="CHEBI:29969"/>
        <dbReference type="ChEBI" id="CHEBI:57540"/>
        <dbReference type="ChEBI" id="CHEBI:61930"/>
        <dbReference type="ChEBI" id="CHEBI:83767"/>
        <dbReference type="EC" id="2.3.1.286"/>
    </reaction>
</comment>
<comment type="cofactor">
    <cofactor evidence="1">
        <name>Zn(2+)</name>
        <dbReference type="ChEBI" id="CHEBI:29105"/>
    </cofactor>
    <text evidence="1">Binds 1 zinc ion per subunit.</text>
</comment>
<comment type="developmental stage">
    <text evidence="5">Expressed at high levels in growing cells, but at decreased levels in developing cells. Expressed in both prestalk and prespore cells.</text>
</comment>
<comment type="similarity">
    <text evidence="6">Belongs to the sirtuin family.</text>
</comment>
<organism>
    <name type="scientific">Dictyostelium discoideum</name>
    <name type="common">Social amoeba</name>
    <dbReference type="NCBI Taxonomy" id="44689"/>
    <lineage>
        <taxon>Eukaryota</taxon>
        <taxon>Amoebozoa</taxon>
        <taxon>Evosea</taxon>
        <taxon>Eumycetozoa</taxon>
        <taxon>Dictyostelia</taxon>
        <taxon>Dictyosteliales</taxon>
        <taxon>Dictyosteliaceae</taxon>
        <taxon>Dictyostelium</taxon>
    </lineage>
</organism>
<protein>
    <recommendedName>
        <fullName>NAD-dependent deacetylase sir2D</fullName>
        <ecNumber evidence="3">2.3.1.286</ecNumber>
    </recommendedName>
    <alternativeName>
        <fullName>Silent information regulator sir2D</fullName>
    </alternativeName>
</protein>
<proteinExistence type="evidence at transcript level"/>
<sequence length="542" mass="62142">MNKRSLENNELNEIQNNQNKNNNNKINKEIPSDNTPLKKLKSINSLEQLQEVDEDEDLDVEIDTKLINKLDKKGRKYEFVGEGYSDEEQISDDYEDDESSEYEYGYENEDELLDDEDHLDNINEIKKIQKKLVNTETSTSITNTSSTTTTSTSTTTTTTTKTQINETILLDILNNNKDEVDDEIQRIGNNVGNSKEEEGEEEEENIELVARSFIYKHIQEKKSLGIDPIEFTKDIGFKLELEKDDDAWEIITAFLTRKKVAVNLFLNYLKYNTLARPYRKKIATLDLSTFEKVCQLFESSKNIVIITGAGVSVSCGIPDFRSKGGVYETIEKKYNLPRPESLFDIHYLRANPLPFFEFAKEIFPGNHKPSPTHSFIKLLDEKGKLLRNYTQNIDTLEHVAGIDREKLVNCHGSFSTATCITCKLTVDGTTIRDTIMKMEIPLCQQCNDGQSFMKPDIVFFGENLPDRFDQCVLKDVKDIDLLIVMGSSLQVQPVSLLPDIVDKQIPQILINRELVAQPHEFDYVYLGDCDQFVQDLLNKVKW</sequence>
<dbReference type="EC" id="2.3.1.286" evidence="3"/>
<dbReference type="EMBL" id="AAFI02000149">
    <property type="protein sequence ID" value="EAL62496.1"/>
    <property type="molecule type" value="Genomic_DNA"/>
</dbReference>
<dbReference type="RefSeq" id="XP_635962.1">
    <property type="nucleotide sequence ID" value="XM_630870.1"/>
</dbReference>
<dbReference type="SMR" id="Q54GV7"/>
<dbReference type="FunCoup" id="Q54GV7">
    <property type="interactions" value="192"/>
</dbReference>
<dbReference type="STRING" id="44689.Q54GV7"/>
<dbReference type="PaxDb" id="44689-DDB0219946"/>
<dbReference type="EnsemblProtists" id="EAL62496">
    <property type="protein sequence ID" value="EAL62496"/>
    <property type="gene ID" value="DDB_G0289967"/>
</dbReference>
<dbReference type="GeneID" id="8627377"/>
<dbReference type="KEGG" id="ddi:DDB_G0289967"/>
<dbReference type="dictyBase" id="DDB_G0289967">
    <property type="gene designation" value="sir2D"/>
</dbReference>
<dbReference type="VEuPathDB" id="AmoebaDB:DDB_G0289967"/>
<dbReference type="eggNOG" id="KOG2684">
    <property type="taxonomic scope" value="Eukaryota"/>
</dbReference>
<dbReference type="HOGENOM" id="CLU_502928_0_0_1"/>
<dbReference type="InParanoid" id="Q54GV7"/>
<dbReference type="OMA" id="KLVNCHG"/>
<dbReference type="PhylomeDB" id="Q54GV7"/>
<dbReference type="Reactome" id="R-DDI-427359">
    <property type="pathway name" value="SIRT1 negatively regulates rRNA expression"/>
</dbReference>
<dbReference type="Reactome" id="R-DDI-9856649">
    <property type="pathway name" value="Transcriptional and post-translational regulation of MITF-M expression and activity"/>
</dbReference>
<dbReference type="PRO" id="PR:Q54GV7"/>
<dbReference type="Proteomes" id="UP000002195">
    <property type="component" value="Chromosome 5"/>
</dbReference>
<dbReference type="GO" id="GO:0005634">
    <property type="term" value="C:nucleus"/>
    <property type="evidence" value="ECO:0000314"/>
    <property type="project" value="dictyBase"/>
</dbReference>
<dbReference type="GO" id="GO:0017136">
    <property type="term" value="F:histone deacetylase activity, NAD-dependent"/>
    <property type="evidence" value="ECO:0000318"/>
    <property type="project" value="GO_Central"/>
</dbReference>
<dbReference type="GO" id="GO:0046872">
    <property type="term" value="F:metal ion binding"/>
    <property type="evidence" value="ECO:0007669"/>
    <property type="project" value="UniProtKB-KW"/>
</dbReference>
<dbReference type="GO" id="GO:0070403">
    <property type="term" value="F:NAD+ binding"/>
    <property type="evidence" value="ECO:0000318"/>
    <property type="project" value="GO_Central"/>
</dbReference>
<dbReference type="GO" id="GO:0006914">
    <property type="term" value="P:autophagy"/>
    <property type="evidence" value="ECO:0000315"/>
    <property type="project" value="dictyBase"/>
</dbReference>
<dbReference type="GO" id="GO:0031507">
    <property type="term" value="P:heterochromatin formation"/>
    <property type="evidence" value="ECO:0000318"/>
    <property type="project" value="GO_Central"/>
</dbReference>
<dbReference type="GO" id="GO:0010629">
    <property type="term" value="P:negative regulation of gene expression"/>
    <property type="evidence" value="ECO:0000315"/>
    <property type="project" value="dictyBase"/>
</dbReference>
<dbReference type="GO" id="GO:0010628">
    <property type="term" value="P:positive regulation of gene expression"/>
    <property type="evidence" value="ECO:0000315"/>
    <property type="project" value="dictyBase"/>
</dbReference>
<dbReference type="GO" id="GO:0030587">
    <property type="term" value="P:sorocarp development"/>
    <property type="evidence" value="ECO:0000315"/>
    <property type="project" value="dictyBase"/>
</dbReference>
<dbReference type="GO" id="GO:0044671">
    <property type="term" value="P:sorocarp spore cell differentiation"/>
    <property type="evidence" value="ECO:0000315"/>
    <property type="project" value="dictyBase"/>
</dbReference>
<dbReference type="CDD" id="cd01408">
    <property type="entry name" value="SIRT1"/>
    <property type="match status" value="1"/>
</dbReference>
<dbReference type="Gene3D" id="3.30.1600.10">
    <property type="entry name" value="SIR2/SIRT2 'Small Domain"/>
    <property type="match status" value="1"/>
</dbReference>
<dbReference type="Gene3D" id="3.40.50.1220">
    <property type="entry name" value="TPP-binding domain"/>
    <property type="match status" value="1"/>
</dbReference>
<dbReference type="InterPro" id="IPR029035">
    <property type="entry name" value="DHS-like_NAD/FAD-binding_dom"/>
</dbReference>
<dbReference type="InterPro" id="IPR050134">
    <property type="entry name" value="NAD-dep_sirtuin_deacylases"/>
</dbReference>
<dbReference type="InterPro" id="IPR003000">
    <property type="entry name" value="Sirtuin"/>
</dbReference>
<dbReference type="InterPro" id="IPR026591">
    <property type="entry name" value="Sirtuin_cat_small_dom_sf"/>
</dbReference>
<dbReference type="InterPro" id="IPR026590">
    <property type="entry name" value="Ssirtuin_cat_dom"/>
</dbReference>
<dbReference type="PANTHER" id="PTHR11085:SF9">
    <property type="entry name" value="NAD-DEPENDENT PROTEIN DEACETYLASE SIRTUIN-1"/>
    <property type="match status" value="1"/>
</dbReference>
<dbReference type="PANTHER" id="PTHR11085">
    <property type="entry name" value="NAD-DEPENDENT PROTEIN DEACYLASE SIRTUIN-5, MITOCHONDRIAL-RELATED"/>
    <property type="match status" value="1"/>
</dbReference>
<dbReference type="Pfam" id="PF02146">
    <property type="entry name" value="SIR2"/>
    <property type="match status" value="1"/>
</dbReference>
<dbReference type="SUPFAM" id="SSF52467">
    <property type="entry name" value="DHS-like NAD/FAD-binding domain"/>
    <property type="match status" value="1"/>
</dbReference>
<dbReference type="PROSITE" id="PS50305">
    <property type="entry name" value="SIRTUIN"/>
    <property type="match status" value="1"/>
</dbReference>
<reference key="1">
    <citation type="journal article" date="2005" name="Nature">
        <title>The genome of the social amoeba Dictyostelium discoideum.</title>
        <authorList>
            <person name="Eichinger L."/>
            <person name="Pachebat J.A."/>
            <person name="Gloeckner G."/>
            <person name="Rajandream M.A."/>
            <person name="Sucgang R."/>
            <person name="Berriman M."/>
            <person name="Song J."/>
            <person name="Olsen R."/>
            <person name="Szafranski K."/>
            <person name="Xu Q."/>
            <person name="Tunggal B."/>
            <person name="Kummerfeld S."/>
            <person name="Madera M."/>
            <person name="Konfortov B.A."/>
            <person name="Rivero F."/>
            <person name="Bankier A.T."/>
            <person name="Lehmann R."/>
            <person name="Hamlin N."/>
            <person name="Davies R."/>
            <person name="Gaudet P."/>
            <person name="Fey P."/>
            <person name="Pilcher K."/>
            <person name="Chen G."/>
            <person name="Saunders D."/>
            <person name="Sodergren E.J."/>
            <person name="Davis P."/>
            <person name="Kerhornou A."/>
            <person name="Nie X."/>
            <person name="Hall N."/>
            <person name="Anjard C."/>
            <person name="Hemphill L."/>
            <person name="Bason N."/>
            <person name="Farbrother P."/>
            <person name="Desany B."/>
            <person name="Just E."/>
            <person name="Morio T."/>
            <person name="Rost R."/>
            <person name="Churcher C.M."/>
            <person name="Cooper J."/>
            <person name="Haydock S."/>
            <person name="van Driessche N."/>
            <person name="Cronin A."/>
            <person name="Goodhead I."/>
            <person name="Muzny D.M."/>
            <person name="Mourier T."/>
            <person name="Pain A."/>
            <person name="Lu M."/>
            <person name="Harper D."/>
            <person name="Lindsay R."/>
            <person name="Hauser H."/>
            <person name="James K.D."/>
            <person name="Quiles M."/>
            <person name="Madan Babu M."/>
            <person name="Saito T."/>
            <person name="Buchrieser C."/>
            <person name="Wardroper A."/>
            <person name="Felder M."/>
            <person name="Thangavelu M."/>
            <person name="Johnson D."/>
            <person name="Knights A."/>
            <person name="Loulseged H."/>
            <person name="Mungall K.L."/>
            <person name="Oliver K."/>
            <person name="Price C."/>
            <person name="Quail M.A."/>
            <person name="Urushihara H."/>
            <person name="Hernandez J."/>
            <person name="Rabbinowitsch E."/>
            <person name="Steffen D."/>
            <person name="Sanders M."/>
            <person name="Ma J."/>
            <person name="Kohara Y."/>
            <person name="Sharp S."/>
            <person name="Simmonds M.N."/>
            <person name="Spiegler S."/>
            <person name="Tivey A."/>
            <person name="Sugano S."/>
            <person name="White B."/>
            <person name="Walker D."/>
            <person name="Woodward J.R."/>
            <person name="Winckler T."/>
            <person name="Tanaka Y."/>
            <person name="Shaulsky G."/>
            <person name="Schleicher M."/>
            <person name="Weinstock G.M."/>
            <person name="Rosenthal A."/>
            <person name="Cox E.C."/>
            <person name="Chisholm R.L."/>
            <person name="Gibbs R.A."/>
            <person name="Loomis W.F."/>
            <person name="Platzer M."/>
            <person name="Kay R.R."/>
            <person name="Williams J.G."/>
            <person name="Dear P.H."/>
            <person name="Noegel A.A."/>
            <person name="Barrell B.G."/>
            <person name="Kuspa A."/>
        </authorList>
    </citation>
    <scope>NUCLEOTIDE SEQUENCE [LARGE SCALE GENOMIC DNA]</scope>
    <source>
        <strain>AX4</strain>
    </source>
</reference>
<reference key="2">
    <citation type="journal article" date="2008" name="Microbes Environ.">
        <title>Developmental and spatial expression of sir2 genes in the cellular slime mold Dictyostelium discoideum.</title>
        <authorList>
            <person name="Katayama T."/>
            <person name="Yasukawa H."/>
        </authorList>
    </citation>
    <scope>DEVELOPMENTAL STAGE</scope>
</reference>
<evidence type="ECO:0000250" key="1"/>
<evidence type="ECO:0000255" key="2"/>
<evidence type="ECO:0000255" key="3">
    <source>
        <dbReference type="PROSITE-ProRule" id="PRU00236"/>
    </source>
</evidence>
<evidence type="ECO:0000256" key="4">
    <source>
        <dbReference type="SAM" id="MobiDB-lite"/>
    </source>
</evidence>
<evidence type="ECO:0000269" key="5">
    <source ref="2"/>
</evidence>
<evidence type="ECO:0000305" key="6"/>
<name>SIR2D_DICDI</name>